<evidence type="ECO:0000255" key="1">
    <source>
        <dbReference type="HAMAP-Rule" id="MF_01151"/>
    </source>
</evidence>
<evidence type="ECO:0000256" key="2">
    <source>
        <dbReference type="SAM" id="MobiDB-lite"/>
    </source>
</evidence>
<reference key="1">
    <citation type="submission" date="2008-08" db="EMBL/GenBank/DDBJ databases">
        <title>Complete sequence of Acidithiobacillus ferrooxidans ATCC 53993.</title>
        <authorList>
            <person name="Lucas S."/>
            <person name="Copeland A."/>
            <person name="Lapidus A."/>
            <person name="Glavina del Rio T."/>
            <person name="Dalin E."/>
            <person name="Tice H."/>
            <person name="Bruce D."/>
            <person name="Goodwin L."/>
            <person name="Pitluck S."/>
            <person name="Sims D."/>
            <person name="Brettin T."/>
            <person name="Detter J.C."/>
            <person name="Han C."/>
            <person name="Kuske C.R."/>
            <person name="Larimer F."/>
            <person name="Land M."/>
            <person name="Hauser L."/>
            <person name="Kyrpides N."/>
            <person name="Lykidis A."/>
            <person name="Borole A.P."/>
        </authorList>
    </citation>
    <scope>NUCLEOTIDE SEQUENCE [LARGE SCALE GENOMIC DNA]</scope>
    <source>
        <strain>ATCC 53993 / BNL-5-31</strain>
    </source>
</reference>
<comment type="function">
    <text evidence="1">Participates actively in the response to hyperosmotic and heat shock by preventing the aggregation of stress-denatured proteins, in association with DnaK and GrpE. It is the nucleotide exchange factor for DnaK and may function as a thermosensor. Unfolded proteins bind initially to DnaJ; upon interaction with the DnaJ-bound protein, DnaK hydrolyzes its bound ATP, resulting in the formation of a stable complex. GrpE releases ADP from DnaK; ATP binding to DnaK triggers the release of the substrate protein, thus completing the reaction cycle. Several rounds of ATP-dependent interactions between DnaJ, DnaK and GrpE are required for fully efficient folding.</text>
</comment>
<comment type="subunit">
    <text evidence="1">Homodimer.</text>
</comment>
<comment type="subcellular location">
    <subcellularLocation>
        <location evidence="1">Cytoplasm</location>
    </subcellularLocation>
</comment>
<comment type="similarity">
    <text evidence="1">Belongs to the GrpE family.</text>
</comment>
<protein>
    <recommendedName>
        <fullName evidence="1">Protein GrpE</fullName>
    </recommendedName>
    <alternativeName>
        <fullName evidence="1">HSP-70 cofactor</fullName>
    </alternativeName>
</protein>
<proteinExistence type="inferred from homology"/>
<gene>
    <name evidence="1" type="primary">grpE</name>
    <name type="ordered locus">Lferr_2292</name>
</gene>
<sequence>MNEEKEESPSTEAEGAGAEVVNWEERAETYRNDYLRALADIENLRKRHEKQVEDARNYAVDRFARELLPVVDSLELALASPVEGAESIALLRQGLENTLTLFAKALGKAGIAPIEMGEGRFDPHLHQAIAMVETEGEANRVLAVHQKGYVMHDRLLRPSMVSVSKAPKAAQ</sequence>
<name>GRPE_ACIF5</name>
<accession>B5ENA4</accession>
<keyword id="KW-0143">Chaperone</keyword>
<keyword id="KW-0963">Cytoplasm</keyword>
<keyword id="KW-0346">Stress response</keyword>
<dbReference type="EMBL" id="CP001132">
    <property type="protein sequence ID" value="ACH84493.1"/>
    <property type="molecule type" value="Genomic_DNA"/>
</dbReference>
<dbReference type="RefSeq" id="WP_009563302.1">
    <property type="nucleotide sequence ID" value="NC_011206.1"/>
</dbReference>
<dbReference type="SMR" id="B5ENA4"/>
<dbReference type="KEGG" id="afe:Lferr_2292"/>
<dbReference type="eggNOG" id="COG0576">
    <property type="taxonomic scope" value="Bacteria"/>
</dbReference>
<dbReference type="HOGENOM" id="CLU_057217_6_0_6"/>
<dbReference type="GO" id="GO:0005829">
    <property type="term" value="C:cytosol"/>
    <property type="evidence" value="ECO:0007669"/>
    <property type="project" value="TreeGrafter"/>
</dbReference>
<dbReference type="GO" id="GO:0000774">
    <property type="term" value="F:adenyl-nucleotide exchange factor activity"/>
    <property type="evidence" value="ECO:0007669"/>
    <property type="project" value="InterPro"/>
</dbReference>
<dbReference type="GO" id="GO:0042803">
    <property type="term" value="F:protein homodimerization activity"/>
    <property type="evidence" value="ECO:0007669"/>
    <property type="project" value="InterPro"/>
</dbReference>
<dbReference type="GO" id="GO:0051087">
    <property type="term" value="F:protein-folding chaperone binding"/>
    <property type="evidence" value="ECO:0007669"/>
    <property type="project" value="InterPro"/>
</dbReference>
<dbReference type="GO" id="GO:0051082">
    <property type="term" value="F:unfolded protein binding"/>
    <property type="evidence" value="ECO:0007669"/>
    <property type="project" value="TreeGrafter"/>
</dbReference>
<dbReference type="GO" id="GO:0006457">
    <property type="term" value="P:protein folding"/>
    <property type="evidence" value="ECO:0007669"/>
    <property type="project" value="InterPro"/>
</dbReference>
<dbReference type="CDD" id="cd00446">
    <property type="entry name" value="GrpE"/>
    <property type="match status" value="1"/>
</dbReference>
<dbReference type="FunFam" id="2.30.22.10:FF:000001">
    <property type="entry name" value="Protein GrpE"/>
    <property type="match status" value="1"/>
</dbReference>
<dbReference type="Gene3D" id="3.90.20.20">
    <property type="match status" value="1"/>
</dbReference>
<dbReference type="Gene3D" id="2.30.22.10">
    <property type="entry name" value="Head domain of nucleotide exchange factor GrpE"/>
    <property type="match status" value="1"/>
</dbReference>
<dbReference type="HAMAP" id="MF_01151">
    <property type="entry name" value="GrpE"/>
    <property type="match status" value="1"/>
</dbReference>
<dbReference type="InterPro" id="IPR000740">
    <property type="entry name" value="GrpE"/>
</dbReference>
<dbReference type="InterPro" id="IPR013805">
    <property type="entry name" value="GrpE_coiled_coil"/>
</dbReference>
<dbReference type="InterPro" id="IPR009012">
    <property type="entry name" value="GrpE_head"/>
</dbReference>
<dbReference type="PANTHER" id="PTHR21237">
    <property type="entry name" value="GRPE PROTEIN"/>
    <property type="match status" value="1"/>
</dbReference>
<dbReference type="PANTHER" id="PTHR21237:SF23">
    <property type="entry name" value="GRPE PROTEIN HOMOLOG, MITOCHONDRIAL"/>
    <property type="match status" value="1"/>
</dbReference>
<dbReference type="Pfam" id="PF01025">
    <property type="entry name" value="GrpE"/>
    <property type="match status" value="1"/>
</dbReference>
<dbReference type="PRINTS" id="PR00773">
    <property type="entry name" value="GRPEPROTEIN"/>
</dbReference>
<dbReference type="SUPFAM" id="SSF58014">
    <property type="entry name" value="Coiled-coil domain of nucleotide exchange factor GrpE"/>
    <property type="match status" value="1"/>
</dbReference>
<dbReference type="SUPFAM" id="SSF51064">
    <property type="entry name" value="Head domain of nucleotide exchange factor GrpE"/>
    <property type="match status" value="1"/>
</dbReference>
<dbReference type="PROSITE" id="PS01071">
    <property type="entry name" value="GRPE"/>
    <property type="match status" value="1"/>
</dbReference>
<feature type="chain" id="PRO_1000137528" description="Protein GrpE">
    <location>
        <begin position="1"/>
        <end position="171"/>
    </location>
</feature>
<feature type="region of interest" description="Disordered" evidence="2">
    <location>
        <begin position="1"/>
        <end position="20"/>
    </location>
</feature>
<organism>
    <name type="scientific">Acidithiobacillus ferrooxidans (strain ATCC 53993 / BNL-5-31)</name>
    <name type="common">Leptospirillum ferrooxidans (ATCC 53993)</name>
    <dbReference type="NCBI Taxonomy" id="380394"/>
    <lineage>
        <taxon>Bacteria</taxon>
        <taxon>Pseudomonadati</taxon>
        <taxon>Pseudomonadota</taxon>
        <taxon>Acidithiobacillia</taxon>
        <taxon>Acidithiobacillales</taxon>
        <taxon>Acidithiobacillaceae</taxon>
        <taxon>Acidithiobacillus</taxon>
    </lineage>
</organism>